<proteinExistence type="inferred from homology"/>
<sequence length="271" mass="30346">MNSKLSLSTKLSSSGKTQLAEYFATPPFKVITLPSYDDAWANGLNAMQMSSSPGVLAGDLLEIDISLAKLTALSLNTQAFTRVQAMNEGDSAMQTTHILLAENSRLFYLPHPLVLHKDSVFKQQTQIEMGEQSELIYGEIVAIGRVLNDERFAFRQFSSHLKIYTLKDDGKKRPLVSDCIQWLPSKMNLTALSQMENYSHQGSLTYLNLAKNNAEIKQQVQALQQQSTEEKDLLIGISQLNEYGLMVRVLGCRAEQIQKLFEKIGRLLKSV</sequence>
<evidence type="ECO:0000255" key="1">
    <source>
        <dbReference type="HAMAP-Rule" id="MF_01384"/>
    </source>
</evidence>
<feature type="chain" id="PRO_1000145089" description="Urease accessory protein UreD">
    <location>
        <begin position="1"/>
        <end position="271"/>
    </location>
</feature>
<dbReference type="EMBL" id="CP000057">
    <property type="protein sequence ID" value="AAX87584.1"/>
    <property type="molecule type" value="Genomic_DNA"/>
</dbReference>
<dbReference type="RefSeq" id="WP_005660991.1">
    <property type="nucleotide sequence ID" value="NC_007146.2"/>
</dbReference>
<dbReference type="SMR" id="Q4QN13"/>
<dbReference type="GeneID" id="93219544"/>
<dbReference type="KEGG" id="hit:NTHI0661"/>
<dbReference type="HOGENOM" id="CLU_056339_6_0_6"/>
<dbReference type="Proteomes" id="UP000002525">
    <property type="component" value="Chromosome"/>
</dbReference>
<dbReference type="GO" id="GO:0005737">
    <property type="term" value="C:cytoplasm"/>
    <property type="evidence" value="ECO:0007669"/>
    <property type="project" value="UniProtKB-SubCell"/>
</dbReference>
<dbReference type="GO" id="GO:0016151">
    <property type="term" value="F:nickel cation binding"/>
    <property type="evidence" value="ECO:0007669"/>
    <property type="project" value="UniProtKB-UniRule"/>
</dbReference>
<dbReference type="HAMAP" id="MF_01384">
    <property type="entry name" value="UreD"/>
    <property type="match status" value="1"/>
</dbReference>
<dbReference type="InterPro" id="IPR002669">
    <property type="entry name" value="UreD"/>
</dbReference>
<dbReference type="PANTHER" id="PTHR33643">
    <property type="entry name" value="UREASE ACCESSORY PROTEIN D"/>
    <property type="match status" value="1"/>
</dbReference>
<dbReference type="PANTHER" id="PTHR33643:SF1">
    <property type="entry name" value="UREASE ACCESSORY PROTEIN D"/>
    <property type="match status" value="1"/>
</dbReference>
<dbReference type="Pfam" id="PF01774">
    <property type="entry name" value="UreD"/>
    <property type="match status" value="1"/>
</dbReference>
<name>URED_HAEI8</name>
<accession>Q4QN13</accession>
<comment type="function">
    <text evidence="1">Required for maturation of urease via the functional incorporation of the urease nickel metallocenter.</text>
</comment>
<comment type="subunit">
    <text evidence="1">UreD, UreF and UreG form a complex that acts as a GTP-hydrolysis-dependent molecular chaperone, activating the urease apoprotein by helping to assemble the nickel containing metallocenter of UreC. The UreE protein probably delivers the nickel.</text>
</comment>
<comment type="subcellular location">
    <subcellularLocation>
        <location evidence="1">Cytoplasm</location>
    </subcellularLocation>
</comment>
<comment type="similarity">
    <text evidence="1">Belongs to the UreD family.</text>
</comment>
<protein>
    <recommendedName>
        <fullName evidence="1">Urease accessory protein UreD</fullName>
    </recommendedName>
</protein>
<reference key="1">
    <citation type="journal article" date="2005" name="J. Bacteriol.">
        <title>Genomic sequence of an otitis media isolate of nontypeable Haemophilus influenzae: comparative study with H. influenzae serotype d, strain KW20.</title>
        <authorList>
            <person name="Harrison A."/>
            <person name="Dyer D.W."/>
            <person name="Gillaspy A."/>
            <person name="Ray W.C."/>
            <person name="Mungur R."/>
            <person name="Carson M.B."/>
            <person name="Zhong H."/>
            <person name="Gipson J."/>
            <person name="Gipson M."/>
            <person name="Johnson L.S."/>
            <person name="Lewis L."/>
            <person name="Bakaletz L.O."/>
            <person name="Munson R.S. Jr."/>
        </authorList>
    </citation>
    <scope>NUCLEOTIDE SEQUENCE [LARGE SCALE GENOMIC DNA]</scope>
    <source>
        <strain>86-028NP</strain>
    </source>
</reference>
<keyword id="KW-0143">Chaperone</keyword>
<keyword id="KW-0963">Cytoplasm</keyword>
<keyword id="KW-0996">Nickel insertion</keyword>
<gene>
    <name evidence="1" type="primary">ureD</name>
    <name type="ordered locus">NTHI0661</name>
</gene>
<organism>
    <name type="scientific">Haemophilus influenzae (strain 86-028NP)</name>
    <dbReference type="NCBI Taxonomy" id="281310"/>
    <lineage>
        <taxon>Bacteria</taxon>
        <taxon>Pseudomonadati</taxon>
        <taxon>Pseudomonadota</taxon>
        <taxon>Gammaproteobacteria</taxon>
        <taxon>Pasteurellales</taxon>
        <taxon>Pasteurellaceae</taxon>
        <taxon>Haemophilus</taxon>
    </lineage>
</organism>